<gene>
    <name type="primary">copZ</name>
    <name type="ordered locus">SACOL2573</name>
</gene>
<evidence type="ECO:0000250" key="1"/>
<evidence type="ECO:0000255" key="2">
    <source>
        <dbReference type="PROSITE-ProRule" id="PRU00280"/>
    </source>
</evidence>
<sequence>MSQEILNVEGMSCGHCKSAVESALNNIDGVTSADVNLENGQVSVQYDDSKVAVSQMKDAIEDQGYDVV</sequence>
<proteinExistence type="inferred from homology"/>
<feature type="chain" id="PRO_0000351271" description="Copper chaperone CopZ">
    <location>
        <begin position="1"/>
        <end position="68"/>
    </location>
</feature>
<feature type="domain" description="HMA" evidence="2">
    <location>
        <begin position="2"/>
        <end position="68"/>
    </location>
</feature>
<feature type="binding site" evidence="2">
    <location>
        <position position="13"/>
    </location>
    <ligand>
        <name>Cu cation</name>
        <dbReference type="ChEBI" id="CHEBI:23378"/>
    </ligand>
</feature>
<feature type="binding site" evidence="2">
    <location>
        <position position="16"/>
    </location>
    <ligand>
        <name>Cu cation</name>
        <dbReference type="ChEBI" id="CHEBI:23378"/>
    </ligand>
</feature>
<organism>
    <name type="scientific">Staphylococcus aureus (strain COL)</name>
    <dbReference type="NCBI Taxonomy" id="93062"/>
    <lineage>
        <taxon>Bacteria</taxon>
        <taxon>Bacillati</taxon>
        <taxon>Bacillota</taxon>
        <taxon>Bacilli</taxon>
        <taxon>Bacillales</taxon>
        <taxon>Staphylococcaceae</taxon>
        <taxon>Staphylococcus</taxon>
    </lineage>
</organism>
<keyword id="KW-0143">Chaperone</keyword>
<keyword id="KW-0186">Copper</keyword>
<keyword id="KW-0963">Cytoplasm</keyword>
<keyword id="KW-0479">Metal-binding</keyword>
<reference key="1">
    <citation type="journal article" date="2005" name="J. Bacteriol.">
        <title>Insights on evolution of virulence and resistance from the complete genome analysis of an early methicillin-resistant Staphylococcus aureus strain and a biofilm-producing methicillin-resistant Staphylococcus epidermidis strain.</title>
        <authorList>
            <person name="Gill S.R."/>
            <person name="Fouts D.E."/>
            <person name="Archer G.L."/>
            <person name="Mongodin E.F."/>
            <person name="DeBoy R.T."/>
            <person name="Ravel J."/>
            <person name="Paulsen I.T."/>
            <person name="Kolonay J.F."/>
            <person name="Brinkac L.M."/>
            <person name="Beanan M.J."/>
            <person name="Dodson R.J."/>
            <person name="Daugherty S.C."/>
            <person name="Madupu R."/>
            <person name="Angiuoli S.V."/>
            <person name="Durkin A.S."/>
            <person name="Haft D.H."/>
            <person name="Vamathevan J.J."/>
            <person name="Khouri H."/>
            <person name="Utterback T.R."/>
            <person name="Lee C."/>
            <person name="Dimitrov G."/>
            <person name="Jiang L."/>
            <person name="Qin H."/>
            <person name="Weidman J."/>
            <person name="Tran K."/>
            <person name="Kang K.H."/>
            <person name="Hance I.R."/>
            <person name="Nelson K.E."/>
            <person name="Fraser C.M."/>
        </authorList>
    </citation>
    <scope>NUCLEOTIDE SEQUENCE [LARGE SCALE GENOMIC DNA]</scope>
    <source>
        <strain>COL</strain>
    </source>
</reference>
<accession>Q5HCZ2</accession>
<protein>
    <recommendedName>
        <fullName>Copper chaperone CopZ</fullName>
    </recommendedName>
</protein>
<name>COPZ_STAAC</name>
<dbReference type="EMBL" id="CP000046">
    <property type="protein sequence ID" value="AAW38575.1"/>
    <property type="molecule type" value="Genomic_DNA"/>
</dbReference>
<dbReference type="RefSeq" id="WP_000076661.1">
    <property type="nucleotide sequence ID" value="NZ_JBGOFO010000001.1"/>
</dbReference>
<dbReference type="SMR" id="Q5HCZ2"/>
<dbReference type="KEGG" id="sac:SACOL2573"/>
<dbReference type="HOGENOM" id="CLU_134973_10_4_9"/>
<dbReference type="Proteomes" id="UP000000530">
    <property type="component" value="Chromosome"/>
</dbReference>
<dbReference type="GO" id="GO:0005737">
    <property type="term" value="C:cytoplasm"/>
    <property type="evidence" value="ECO:0007669"/>
    <property type="project" value="UniProtKB-SubCell"/>
</dbReference>
<dbReference type="GO" id="GO:0005507">
    <property type="term" value="F:copper ion binding"/>
    <property type="evidence" value="ECO:0007669"/>
    <property type="project" value="InterPro"/>
</dbReference>
<dbReference type="CDD" id="cd00371">
    <property type="entry name" value="HMA"/>
    <property type="match status" value="1"/>
</dbReference>
<dbReference type="FunFam" id="3.30.70.100:FF:000005">
    <property type="entry name" value="Copper-exporting P-type ATPase A"/>
    <property type="match status" value="1"/>
</dbReference>
<dbReference type="Gene3D" id="3.30.70.100">
    <property type="match status" value="1"/>
</dbReference>
<dbReference type="InterPro" id="IPR049740">
    <property type="entry name" value="CopZ"/>
</dbReference>
<dbReference type="InterPro" id="IPR017969">
    <property type="entry name" value="Heavy-metal-associated_CS"/>
</dbReference>
<dbReference type="InterPro" id="IPR006122">
    <property type="entry name" value="HMA_Cu_ion-bd"/>
</dbReference>
<dbReference type="InterPro" id="IPR006121">
    <property type="entry name" value="HMA_dom"/>
</dbReference>
<dbReference type="InterPro" id="IPR036163">
    <property type="entry name" value="HMA_dom_sf"/>
</dbReference>
<dbReference type="InterPro" id="IPR001802">
    <property type="entry name" value="MerP/CopZ"/>
</dbReference>
<dbReference type="NCBIfam" id="NF033795">
    <property type="entry name" value="chaper_CopZ_Bs"/>
    <property type="match status" value="1"/>
</dbReference>
<dbReference type="NCBIfam" id="TIGR00003">
    <property type="entry name" value="copper ion binding protein"/>
    <property type="match status" value="1"/>
</dbReference>
<dbReference type="PANTHER" id="PTHR46594">
    <property type="entry name" value="P-TYPE CATION-TRANSPORTING ATPASE"/>
    <property type="match status" value="1"/>
</dbReference>
<dbReference type="PANTHER" id="PTHR46594:SF4">
    <property type="entry name" value="P-TYPE CATION-TRANSPORTING ATPASE"/>
    <property type="match status" value="1"/>
</dbReference>
<dbReference type="Pfam" id="PF00403">
    <property type="entry name" value="HMA"/>
    <property type="match status" value="1"/>
</dbReference>
<dbReference type="PRINTS" id="PR00946">
    <property type="entry name" value="HGSCAVENGER"/>
</dbReference>
<dbReference type="SUPFAM" id="SSF55008">
    <property type="entry name" value="HMA, heavy metal-associated domain"/>
    <property type="match status" value="1"/>
</dbReference>
<dbReference type="PROSITE" id="PS01047">
    <property type="entry name" value="HMA_1"/>
    <property type="match status" value="1"/>
</dbReference>
<dbReference type="PROSITE" id="PS50846">
    <property type="entry name" value="HMA_2"/>
    <property type="match status" value="1"/>
</dbReference>
<comment type="function">
    <text evidence="1">Chaperone that serves for the intracellular sequestration and transport of Cu(+). Delivers Cu(+) to the copper-exporting P-type ATPase A (CopA) (By similarity).</text>
</comment>
<comment type="subcellular location">
    <subcellularLocation>
        <location evidence="1">Cytoplasm</location>
    </subcellularLocation>
</comment>